<name>PSA5_CAEEL</name>
<evidence type="ECO:0000250" key="1"/>
<evidence type="ECO:0000255" key="2">
    <source>
        <dbReference type="PROSITE-ProRule" id="PRU00808"/>
    </source>
</evidence>
<dbReference type="EMBL" id="Z79754">
    <property type="protein sequence ID" value="CAB02097.1"/>
    <property type="molecule type" value="Genomic_DNA"/>
</dbReference>
<dbReference type="PIR" id="T21350">
    <property type="entry name" value="T21350"/>
</dbReference>
<dbReference type="RefSeq" id="NP_492765.1">
    <property type="nucleotide sequence ID" value="NM_060364.7"/>
</dbReference>
<dbReference type="SMR" id="Q95008"/>
<dbReference type="BioGRID" id="38356">
    <property type="interactions" value="46"/>
</dbReference>
<dbReference type="DIP" id="DIP-24675N"/>
<dbReference type="FunCoup" id="Q95008">
    <property type="interactions" value="2518"/>
</dbReference>
<dbReference type="IntAct" id="Q95008">
    <property type="interactions" value="4"/>
</dbReference>
<dbReference type="STRING" id="6239.F25H2.9.1"/>
<dbReference type="PaxDb" id="6239-F25H2.9.1"/>
<dbReference type="PeptideAtlas" id="Q95008"/>
<dbReference type="EnsemblMetazoa" id="F25H2.9.1">
    <property type="protein sequence ID" value="F25H2.9.1"/>
    <property type="gene ID" value="WBGene00003926"/>
</dbReference>
<dbReference type="GeneID" id="172942"/>
<dbReference type="KEGG" id="cel:CELE_F25H2.9"/>
<dbReference type="UCSC" id="F25H2.9">
    <property type="organism name" value="c. elegans"/>
</dbReference>
<dbReference type="AGR" id="WB:WBGene00003926"/>
<dbReference type="CTD" id="172942"/>
<dbReference type="WormBase" id="F25H2.9">
    <property type="protein sequence ID" value="CE09654"/>
    <property type="gene ID" value="WBGene00003926"/>
    <property type="gene designation" value="pas-5"/>
</dbReference>
<dbReference type="eggNOG" id="KOG0176">
    <property type="taxonomic scope" value="Eukaryota"/>
</dbReference>
<dbReference type="GeneTree" id="ENSGT00550000074958"/>
<dbReference type="HOGENOM" id="CLU_035750_4_2_1"/>
<dbReference type="InParanoid" id="Q95008"/>
<dbReference type="OMA" id="RSMIDHA"/>
<dbReference type="OrthoDB" id="431557at2759"/>
<dbReference type="PhylomeDB" id="Q95008"/>
<dbReference type="Reactome" id="R-CEL-1234176">
    <property type="pathway name" value="Oxygen-dependent proline hydroxylation of Hypoxia-inducible Factor Alpha"/>
</dbReference>
<dbReference type="Reactome" id="R-CEL-1236978">
    <property type="pathway name" value="Cross-presentation of soluble exogenous antigens (endosomes)"/>
</dbReference>
<dbReference type="Reactome" id="R-CEL-187577">
    <property type="pathway name" value="SCF(Skp2)-mediated degradation of p27/p21"/>
</dbReference>
<dbReference type="Reactome" id="R-CEL-195253">
    <property type="pathway name" value="Degradation of beta-catenin by the destruction complex"/>
</dbReference>
<dbReference type="Reactome" id="R-CEL-349425">
    <property type="pathway name" value="Autodegradation of the E3 ubiquitin ligase COP1"/>
</dbReference>
<dbReference type="Reactome" id="R-CEL-350562">
    <property type="pathway name" value="Regulation of ornithine decarboxylase (ODC)"/>
</dbReference>
<dbReference type="Reactome" id="R-CEL-382556">
    <property type="pathway name" value="ABC-family proteins mediated transport"/>
</dbReference>
<dbReference type="Reactome" id="R-CEL-4608870">
    <property type="pathway name" value="Asymmetric localization of PCP proteins"/>
</dbReference>
<dbReference type="Reactome" id="R-CEL-4641258">
    <property type="pathway name" value="Degradation of DVL"/>
</dbReference>
<dbReference type="Reactome" id="R-CEL-5632684">
    <property type="pathway name" value="Hedgehog 'on' state"/>
</dbReference>
<dbReference type="Reactome" id="R-CEL-5687128">
    <property type="pathway name" value="MAPK6/MAPK4 signaling"/>
</dbReference>
<dbReference type="Reactome" id="R-CEL-5689603">
    <property type="pathway name" value="UCH proteinases"/>
</dbReference>
<dbReference type="Reactome" id="R-CEL-5689880">
    <property type="pathway name" value="Ub-specific processing proteases"/>
</dbReference>
<dbReference type="Reactome" id="R-CEL-6798695">
    <property type="pathway name" value="Neutrophil degranulation"/>
</dbReference>
<dbReference type="Reactome" id="R-CEL-68949">
    <property type="pathway name" value="Orc1 removal from chromatin"/>
</dbReference>
<dbReference type="Reactome" id="R-CEL-69017">
    <property type="pathway name" value="CDK-mediated phosphorylation and removal of Cdc6"/>
</dbReference>
<dbReference type="Reactome" id="R-CEL-69601">
    <property type="pathway name" value="Ubiquitin Mediated Degradation of Phosphorylated Cdc25A"/>
</dbReference>
<dbReference type="Reactome" id="R-CEL-75815">
    <property type="pathway name" value="Ubiquitin-dependent degradation of Cyclin D"/>
</dbReference>
<dbReference type="Reactome" id="R-CEL-8854050">
    <property type="pathway name" value="FBXL7 down-regulates AURKA during mitotic entry and in early mitosis"/>
</dbReference>
<dbReference type="Reactome" id="R-CEL-8939902">
    <property type="pathway name" value="Regulation of RUNX2 expression and activity"/>
</dbReference>
<dbReference type="Reactome" id="R-CEL-8941858">
    <property type="pathway name" value="Regulation of RUNX3 expression and activity"/>
</dbReference>
<dbReference type="Reactome" id="R-CEL-8948751">
    <property type="pathway name" value="Regulation of PTEN stability and activity"/>
</dbReference>
<dbReference type="Reactome" id="R-CEL-8951664">
    <property type="pathway name" value="Neddylation"/>
</dbReference>
<dbReference type="Reactome" id="R-CEL-9755511">
    <property type="pathway name" value="KEAP1-NFE2L2 pathway"/>
</dbReference>
<dbReference type="Reactome" id="R-CEL-9762114">
    <property type="pathway name" value="GSK3B and BTRC:CUL1-mediated-degradation of NFE2L2"/>
</dbReference>
<dbReference type="Reactome" id="R-CEL-983168">
    <property type="pathway name" value="Antigen processing: Ubiquitination &amp; Proteasome degradation"/>
</dbReference>
<dbReference type="Reactome" id="R-CEL-9907900">
    <property type="pathway name" value="Proteasome assembly"/>
</dbReference>
<dbReference type="SignaLink" id="Q95008"/>
<dbReference type="PRO" id="PR:Q95008"/>
<dbReference type="Proteomes" id="UP000001940">
    <property type="component" value="Chromosome I"/>
</dbReference>
<dbReference type="Bgee" id="WBGene00003926">
    <property type="expression patterns" value="Expressed in germ line (C elegans) and 4 other cell types or tissues"/>
</dbReference>
<dbReference type="GO" id="GO:0005737">
    <property type="term" value="C:cytoplasm"/>
    <property type="evidence" value="ECO:0007669"/>
    <property type="project" value="UniProtKB-SubCell"/>
</dbReference>
<dbReference type="GO" id="GO:0005634">
    <property type="term" value="C:nucleus"/>
    <property type="evidence" value="ECO:0000318"/>
    <property type="project" value="GO_Central"/>
</dbReference>
<dbReference type="GO" id="GO:0019773">
    <property type="term" value="C:proteasome core complex, alpha-subunit complex"/>
    <property type="evidence" value="ECO:0000250"/>
    <property type="project" value="UniProtKB"/>
</dbReference>
<dbReference type="GO" id="GO:0043161">
    <property type="term" value="P:proteasome-mediated ubiquitin-dependent protein catabolic process"/>
    <property type="evidence" value="ECO:0000318"/>
    <property type="project" value="GO_Central"/>
</dbReference>
<dbReference type="CDD" id="cd03753">
    <property type="entry name" value="proteasome_alpha_type_5"/>
    <property type="match status" value="1"/>
</dbReference>
<dbReference type="FunFam" id="3.60.20.10:FF:000019">
    <property type="entry name" value="Proteasome subunit alpha type"/>
    <property type="match status" value="1"/>
</dbReference>
<dbReference type="Gene3D" id="3.60.20.10">
    <property type="entry name" value="Glutamine Phosphoribosylpyrophosphate, subunit 1, domain 1"/>
    <property type="match status" value="1"/>
</dbReference>
<dbReference type="InterPro" id="IPR029055">
    <property type="entry name" value="Ntn_hydrolases_N"/>
</dbReference>
<dbReference type="InterPro" id="IPR050115">
    <property type="entry name" value="Proteasome_alpha"/>
</dbReference>
<dbReference type="InterPro" id="IPR023332">
    <property type="entry name" value="Proteasome_alpha-type"/>
</dbReference>
<dbReference type="InterPro" id="IPR033812">
    <property type="entry name" value="Proteasome_alpha_type_5"/>
</dbReference>
<dbReference type="InterPro" id="IPR000426">
    <property type="entry name" value="Proteasome_asu_N"/>
</dbReference>
<dbReference type="InterPro" id="IPR001353">
    <property type="entry name" value="Proteasome_sua/b"/>
</dbReference>
<dbReference type="NCBIfam" id="NF003075">
    <property type="entry name" value="PRK03996.1"/>
    <property type="match status" value="1"/>
</dbReference>
<dbReference type="PANTHER" id="PTHR11599">
    <property type="entry name" value="PROTEASOME SUBUNIT ALPHA/BETA"/>
    <property type="match status" value="1"/>
</dbReference>
<dbReference type="Pfam" id="PF00227">
    <property type="entry name" value="Proteasome"/>
    <property type="match status" value="1"/>
</dbReference>
<dbReference type="Pfam" id="PF10584">
    <property type="entry name" value="Proteasome_A_N"/>
    <property type="match status" value="1"/>
</dbReference>
<dbReference type="SMART" id="SM00948">
    <property type="entry name" value="Proteasome_A_N"/>
    <property type="match status" value="1"/>
</dbReference>
<dbReference type="SUPFAM" id="SSF56235">
    <property type="entry name" value="N-terminal nucleophile aminohydrolases (Ntn hydrolases)"/>
    <property type="match status" value="1"/>
</dbReference>
<dbReference type="PROSITE" id="PS00388">
    <property type="entry name" value="PROTEASOME_ALPHA_1"/>
    <property type="match status" value="1"/>
</dbReference>
<dbReference type="PROSITE" id="PS51475">
    <property type="entry name" value="PROTEASOME_ALPHA_2"/>
    <property type="match status" value="1"/>
</dbReference>
<sequence length="248" mass="27207">MFLTRSEYDRGVNTFSPEGRLFQVEYAIEAVKLGSTSIGIKTSEGVLLAAEKRSTSKLMVNDAIEKISKVDQHIGVTFAGLIADSRTLVERAQIEAQNFWFTYNRKIRVEDVTQSVANLALQFGDDDVKASMSRPFGVAMLFAGVDQEGAKLFHLDPSGTFIDCKAKSIGAASDGAEQNLKEQYHDALTIKEGLKMALAILKQVMEEKLNSANVEVVVIKPTVDAKGRPIGEFTRVSNEELDQVITSL</sequence>
<proteinExistence type="evidence at protein level"/>
<keyword id="KW-0963">Cytoplasm</keyword>
<keyword id="KW-0539">Nucleus</keyword>
<keyword id="KW-0647">Proteasome</keyword>
<keyword id="KW-1185">Reference proteome</keyword>
<comment type="function">
    <text evidence="1">The proteasome is a multicatalytic proteinase complex which is characterized by its ability to cleave peptides with Arg, Phe, Tyr, Leu, and Glu adjacent to the leaving group at neutral or slightly basic pH. The proteasome has an ATP-dependent proteolytic activity (By similarity).</text>
</comment>
<comment type="subunit">
    <text evidence="1">The 26S proteasome consists of a 20S proteasome core and two 19S regulatory subunits. The 20S proteasome core is composed of 28 subunits that are arranged in four stacked rings, resulting in a barrel-shaped structure. The two end rings are each formed by seven alpha subunits, and the two central rings are each formed by seven beta subunits. The catalytic chamber with the active sites is on the inside of the barrel (By similarity).</text>
</comment>
<comment type="interaction">
    <interactant intactId="EBI-320441">
        <id>Q95008</id>
    </interactant>
    <interactant intactId="EBI-316796">
        <id>Q95005</id>
        <label>pas-4</label>
    </interactant>
    <organismsDiffer>false</organismsDiffer>
    <experiments>3</experiments>
</comment>
<comment type="subcellular location">
    <subcellularLocation>
        <location evidence="1">Cytoplasm</location>
    </subcellularLocation>
    <subcellularLocation>
        <location evidence="1">Nucleus</location>
    </subcellularLocation>
</comment>
<comment type="similarity">
    <text evidence="2">Belongs to the peptidase T1A family.</text>
</comment>
<accession>Q95008</accession>
<gene>
    <name type="primary">pas-5</name>
    <name type="ORF">F25H2.9</name>
</gene>
<feature type="chain" id="PRO_0000124120" description="Proteasome subunit alpha type-5">
    <location>
        <begin position="1"/>
        <end position="248"/>
    </location>
</feature>
<organism>
    <name type="scientific">Caenorhabditis elegans</name>
    <dbReference type="NCBI Taxonomy" id="6239"/>
    <lineage>
        <taxon>Eukaryota</taxon>
        <taxon>Metazoa</taxon>
        <taxon>Ecdysozoa</taxon>
        <taxon>Nematoda</taxon>
        <taxon>Chromadorea</taxon>
        <taxon>Rhabditida</taxon>
        <taxon>Rhabditina</taxon>
        <taxon>Rhabditomorpha</taxon>
        <taxon>Rhabditoidea</taxon>
        <taxon>Rhabditidae</taxon>
        <taxon>Peloderinae</taxon>
        <taxon>Caenorhabditis</taxon>
    </lineage>
</organism>
<reference key="1">
    <citation type="journal article" date="1998" name="Science">
        <title>Genome sequence of the nematode C. elegans: a platform for investigating biology.</title>
        <authorList>
            <consortium name="The C. elegans sequencing consortium"/>
        </authorList>
    </citation>
    <scope>NUCLEOTIDE SEQUENCE [LARGE SCALE GENOMIC DNA]</scope>
    <source>
        <strain>Bristol N2</strain>
    </source>
</reference>
<protein>
    <recommendedName>
        <fullName>Proteasome subunit alpha type-5</fullName>
        <shortName>Proteasome subunit alpha 5</shortName>
    </recommendedName>
</protein>